<dbReference type="EMBL" id="BA000036">
    <property type="protein sequence ID" value="BAB99953.1"/>
    <property type="molecule type" value="Genomic_DNA"/>
</dbReference>
<dbReference type="EMBL" id="BX927155">
    <property type="protein sequence ID" value="CAF21222.1"/>
    <property type="molecule type" value="Genomic_DNA"/>
</dbReference>
<dbReference type="RefSeq" id="NP_601759.1">
    <property type="nucleotide sequence ID" value="NC_003450.3"/>
</dbReference>
<dbReference type="RefSeq" id="WP_003857068.1">
    <property type="nucleotide sequence ID" value="NC_006958.1"/>
</dbReference>
<dbReference type="SMR" id="Q8NML3"/>
<dbReference type="STRING" id="196627.cg2831"/>
<dbReference type="DNASU" id="1020507"/>
<dbReference type="GeneID" id="1020507"/>
<dbReference type="KEGG" id="cgb:cg2831"/>
<dbReference type="KEGG" id="cgl:Cgl2560"/>
<dbReference type="PATRIC" id="fig|196627.13.peg.2495"/>
<dbReference type="eggNOG" id="COG2197">
    <property type="taxonomic scope" value="Bacteria"/>
</dbReference>
<dbReference type="HOGENOM" id="CLU_081562_0_0_11"/>
<dbReference type="OrthoDB" id="4069167at2"/>
<dbReference type="BioCyc" id="CORYNE:G18NG-12171-MONOMER"/>
<dbReference type="Proteomes" id="UP000000582">
    <property type="component" value="Chromosome"/>
</dbReference>
<dbReference type="Proteomes" id="UP000001009">
    <property type="component" value="Chromosome"/>
</dbReference>
<dbReference type="GO" id="GO:0003677">
    <property type="term" value="F:DNA binding"/>
    <property type="evidence" value="ECO:0000314"/>
    <property type="project" value="UniProtKB"/>
</dbReference>
<dbReference type="GO" id="GO:0006083">
    <property type="term" value="P:acetate metabolic process"/>
    <property type="evidence" value="ECO:0000315"/>
    <property type="project" value="UniProtKB"/>
</dbReference>
<dbReference type="GO" id="GO:0006355">
    <property type="term" value="P:regulation of DNA-templated transcription"/>
    <property type="evidence" value="ECO:0000315"/>
    <property type="project" value="UniProtKB"/>
</dbReference>
<dbReference type="CDD" id="cd06170">
    <property type="entry name" value="LuxR_C_like"/>
    <property type="match status" value="1"/>
</dbReference>
<dbReference type="FunFam" id="3.30.450.40:FF:000100">
    <property type="entry name" value="GAF modulated transcriptional regulator, LuxR family"/>
    <property type="match status" value="1"/>
</dbReference>
<dbReference type="FunFam" id="1.10.10.10:FF:000304">
    <property type="entry name" value="LuxR family transcriptional regulator"/>
    <property type="match status" value="1"/>
</dbReference>
<dbReference type="Gene3D" id="3.30.450.40">
    <property type="match status" value="1"/>
</dbReference>
<dbReference type="Gene3D" id="1.10.10.10">
    <property type="entry name" value="Winged helix-like DNA-binding domain superfamily/Winged helix DNA-binding domain"/>
    <property type="match status" value="1"/>
</dbReference>
<dbReference type="InterPro" id="IPR003018">
    <property type="entry name" value="GAF"/>
</dbReference>
<dbReference type="InterPro" id="IPR029016">
    <property type="entry name" value="GAF-like_dom_sf"/>
</dbReference>
<dbReference type="InterPro" id="IPR049651">
    <property type="entry name" value="HTH-type_RamA-like"/>
</dbReference>
<dbReference type="InterPro" id="IPR016032">
    <property type="entry name" value="Sig_transdc_resp-reg_C-effctor"/>
</dbReference>
<dbReference type="InterPro" id="IPR000792">
    <property type="entry name" value="Tscrpt_reg_LuxR_C"/>
</dbReference>
<dbReference type="InterPro" id="IPR036388">
    <property type="entry name" value="WH-like_DNA-bd_sf"/>
</dbReference>
<dbReference type="NCBIfam" id="NF041673">
    <property type="entry name" value="transregRamA"/>
    <property type="match status" value="1"/>
</dbReference>
<dbReference type="PANTHER" id="PTHR44688">
    <property type="entry name" value="DNA-BINDING TRANSCRIPTIONAL ACTIVATOR DEVR_DOSR"/>
    <property type="match status" value="1"/>
</dbReference>
<dbReference type="PANTHER" id="PTHR44688:SF16">
    <property type="entry name" value="DNA-BINDING TRANSCRIPTIONAL ACTIVATOR DEVR_DOSR"/>
    <property type="match status" value="1"/>
</dbReference>
<dbReference type="Pfam" id="PF01590">
    <property type="entry name" value="GAF"/>
    <property type="match status" value="1"/>
</dbReference>
<dbReference type="Pfam" id="PF00196">
    <property type="entry name" value="GerE"/>
    <property type="match status" value="1"/>
</dbReference>
<dbReference type="PRINTS" id="PR00038">
    <property type="entry name" value="HTHLUXR"/>
</dbReference>
<dbReference type="SMART" id="SM00065">
    <property type="entry name" value="GAF"/>
    <property type="match status" value="1"/>
</dbReference>
<dbReference type="SMART" id="SM00421">
    <property type="entry name" value="HTH_LUXR"/>
    <property type="match status" value="1"/>
</dbReference>
<dbReference type="SUPFAM" id="SSF46894">
    <property type="entry name" value="C-terminal effector domain of the bipartite response regulators"/>
    <property type="match status" value="1"/>
</dbReference>
<dbReference type="SUPFAM" id="SSF55781">
    <property type="entry name" value="GAF domain-like"/>
    <property type="match status" value="1"/>
</dbReference>
<dbReference type="PROSITE" id="PS50043">
    <property type="entry name" value="HTH_LUXR_2"/>
    <property type="match status" value="1"/>
</dbReference>
<keyword id="KW-0010">Activator</keyword>
<keyword id="KW-0238">DNA-binding</keyword>
<keyword id="KW-1185">Reference proteome</keyword>
<keyword id="KW-0804">Transcription</keyword>
<keyword id="KW-0805">Transcription regulation</keyword>
<name>RAMA_CORGL</name>
<protein>
    <recommendedName>
        <fullName evidence="7">HTH-type transcriptional activator RamA</fullName>
    </recommendedName>
    <alternativeName>
        <fullName evidence="7">LuxR-type transcriptional regulator</fullName>
    </alternativeName>
    <alternativeName>
        <fullName evidence="7">Regulator of acetate metabolism A</fullName>
        <shortName evidence="7">RAMA</shortName>
    </alternativeName>
</protein>
<gene>
    <name evidence="7" type="primary">ramA</name>
    <name type="ordered locus">cg2831</name>
    <name type="ordered locus">Cgl2560</name>
</gene>
<proteinExistence type="evidence at transcript level"/>
<accession>Q8NML3</accession>
<accession>Q6M2S0</accession>
<reference key="1">
    <citation type="submission" date="2002-05" db="EMBL/GenBank/DDBJ databases">
        <title>Complete genomic sequence of Corynebacterium glutamicum ATCC 13032.</title>
        <authorList>
            <person name="Nakagawa S."/>
        </authorList>
    </citation>
    <scope>NUCLEOTIDE SEQUENCE [LARGE SCALE GENOMIC DNA]</scope>
</reference>
<reference key="2">
    <citation type="journal article" date="2003" name="Appl. Microbiol. Biotechnol.">
        <title>The Corynebacterium glutamicum genome: features and impacts on biotechnological processes.</title>
        <authorList>
            <person name="Ikeda M."/>
            <person name="Nakagawa S."/>
        </authorList>
    </citation>
    <scope>NUCLEOTIDE SEQUENCE [LARGE SCALE GENOMIC DNA]</scope>
    <source>
        <strain>ATCC 13032 / DSM 20300 / JCM 1318 / BCRC 11384 / CCUG 27702 / LMG 3730 / NBRC 12168 / NCIMB 10025 / NRRL B-2784 / 534</strain>
    </source>
</reference>
<reference key="3">
    <citation type="journal article" date="2003" name="J. Biotechnol.">
        <title>The complete Corynebacterium glutamicum ATCC 13032 genome sequence and its impact on the production of L-aspartate-derived amino acids and vitamins.</title>
        <authorList>
            <person name="Kalinowski J."/>
            <person name="Bathe B."/>
            <person name="Bartels D."/>
            <person name="Bischoff N."/>
            <person name="Bott M."/>
            <person name="Burkovski A."/>
            <person name="Dusch N."/>
            <person name="Eggeling L."/>
            <person name="Eikmanns B.J."/>
            <person name="Gaigalat L."/>
            <person name="Goesmann A."/>
            <person name="Hartmann M."/>
            <person name="Huthmacher K."/>
            <person name="Kraemer R."/>
            <person name="Linke B."/>
            <person name="McHardy A.C."/>
            <person name="Meyer F."/>
            <person name="Moeckel B."/>
            <person name="Pfefferle W."/>
            <person name="Puehler A."/>
            <person name="Rey D.A."/>
            <person name="Rueckert C."/>
            <person name="Rupp O."/>
            <person name="Sahm H."/>
            <person name="Wendisch V.F."/>
            <person name="Wiegraebe I."/>
            <person name="Tauch A."/>
        </authorList>
    </citation>
    <scope>NUCLEOTIDE SEQUENCE [LARGE SCALE GENOMIC DNA]</scope>
    <source>
        <strain>ATCC 13032 / DSM 20300 / JCM 1318 / BCRC 11384 / CCUG 27702 / LMG 3730 / NBRC 12168 / NCIMB 10025 / NRRL B-2784 / 534</strain>
    </source>
</reference>
<reference key="4">
    <citation type="journal article" date="2006" name="J. Bacteriol.">
        <title>Identification of RamA, a novel LuxR-type transcriptional regulator of genes involved in acetate metabolism of Corynebacterium glutamicum.</title>
        <authorList>
            <person name="Cramer A."/>
            <person name="Gerstmeir R."/>
            <person name="Schaffer S."/>
            <person name="Bott M."/>
            <person name="Eikmanns B.J."/>
        </authorList>
    </citation>
    <scope>FUNCTION</scope>
    <scope>DISRUPTION PHENOTYPE</scope>
    <source>
        <strain>ATCC 13032 / DSM 20300 / JCM 1318 / BCRC 11384 / CCUG 27702 / LMG 3730 / NBRC 12168 / NCIMB 10025 / NRRL B-2784 / 534</strain>
    </source>
</reference>
<reference key="5">
    <citation type="journal article" date="2007" name="J. Bacteriol.">
        <title>RamB, the transcriptional regulator of acetate metabolism in Corynebacterium glutamicum, is subject to regulation by RamA and RamB.</title>
        <authorList>
            <person name="Cramer A."/>
            <person name="Auchter M."/>
            <person name="Frunzke J."/>
            <person name="Bott M."/>
            <person name="Eikmanns B.J."/>
        </authorList>
    </citation>
    <scope>FUNCTION</scope>
    <source>
        <strain>ATCC 13032 / DSM 20300 / JCM 1318 / BCRC 11384 / CCUG 27702 / LMG 3730 / NBRC 12168 / NCIMB 10025 / NRRL B-2784 / 534</strain>
    </source>
</reference>
<reference key="6">
    <citation type="journal article" date="2007" name="J. Mol. Microbiol. Biotechnol.">
        <title>RamA, the transcriptional regulator of acetate metabolism in Corynebacterium glutamicum, is subject to negative autoregulation.</title>
        <authorList>
            <person name="Cramer A."/>
            <person name="Eikmanns B.J."/>
        </authorList>
    </citation>
    <scope>INDUCTION</scope>
    <source>
        <strain>ATCC 13032 / DSM 20300 / JCM 1318 / BCRC 11384 / CCUG 27702 / LMG 3730 / NBRC 12168 / NCIMB 10025 / NRRL B-2784 / 534</strain>
    </source>
</reference>
<reference key="7">
    <citation type="journal article" date="2008" name="FEMS Microbiol. Lett.">
        <title>Triple transcriptional control of the resuscitation promoting factor 2 (rpf2) gene of Corynebacterium glutamicum by the regulators of acetate metabolism RamA and RamB and the cAMP-dependent regulator GlxR.</title>
        <authorList>
            <person name="Jungwirth B."/>
            <person name="Emer D."/>
            <person name="Brune I."/>
            <person name="Hansmeier N."/>
            <person name="Puehler A."/>
            <person name="Eikmanns B.J."/>
            <person name="Tauch A."/>
        </authorList>
    </citation>
    <scope>FUNCTION</scope>
    <scope>DISRUPTION PHENOTYPE</scope>
    <source>
        <strain>ATCC 13032 / DSM 20300 / JCM 1318 / BCRC 11384 / CCUG 27702 / LMG 3730 / NBRC 12168 / NCIMB 10025 / NRRL B-2784 / 534</strain>
    </source>
</reference>
<reference key="8">
    <citation type="journal article" date="2009" name="J. Biotechnol.">
        <title>Complex expression control of the Corynebacterium glutamicum aconitase gene: identification of RamA as a third transcriptional regulator besides AcnR and RipA.</title>
        <authorList>
            <person name="Emer D."/>
            <person name="Krug A."/>
            <person name="Eikmanns B.J."/>
            <person name="Bott M."/>
        </authorList>
    </citation>
    <scope>FUNCTION</scope>
    <scope>DISRUPTION PHENOTYPE</scope>
    <source>
        <strain>ATCC 13032 / DSM 20300 / JCM 1318 / BCRC 11384 / CCUG 27702 / LMG 3730 / NBRC 12168 / NCIMB 10025 / NRRL B-2784 / 534</strain>
    </source>
</reference>
<sequence>MDTQRIKDDEDAIRSALTSLKTATGIPVTMFATVLQDNRLQITQWVGLRTPALQNLVIEPGVGVGGRVVATRRPVGVSDYTRANVISHEKDSAIQDEGLHSIVAVPVIVHREIRGVLYVGVHSAVRLGDTVIEEVTMTARTLEQNLAINSALRRNGVPDGRGSLKANRVMNGAEWEQVRSTHSKLRMLANRVTDEDLRRDLEELCDQMVTPVRIKQTTKLSARELDVLACVALGHTNVEAAEEMGIGAETVKSYLRSVMRKLGAHTRYEAVNAARRIGALP</sequence>
<comment type="function">
    <text evidence="2 3 5 6">RamA is a master regulator of acetate metabolism. It positively controls the expression of acnA, aceA, aceB, ack, pta and ramB genes in the presence of acetate (PubMed:16547043, PubMed:17114251, PubMed:19095019). RamA is also a positive regulator of rpf2 gene expression during growth on glucose as the sole carbon source (PubMed:18355281).</text>
</comment>
<comment type="induction">
    <text evidence="4">RamA represses its own expression.</text>
</comment>
<comment type="disruption phenotype">
    <text evidence="2 5 6">Cells lacking this gene grow on acetate with the same aconitase activity as cells on glucose. This mutant is unable to grow on acetate as the sole carbon and energy source and, in comparison to the wild-type, shows very low specific activities of phosphotransacetylase, acetate kinase, isocitrate lyase, and malate synthase, irrespective of the presence of acetate in the medium (PubMed:16547043, PubMed:19095019). The transcription level of the rpf2 gene is reduced 2.5-fold in the ramA deletion mutant during growth on glucose as the sole carbon source (PubMed:18355281).</text>
</comment>
<evidence type="ECO:0000255" key="1">
    <source>
        <dbReference type="PROSITE-ProRule" id="PRU00411"/>
    </source>
</evidence>
<evidence type="ECO:0000269" key="2">
    <source>
    </source>
</evidence>
<evidence type="ECO:0000269" key="3">
    <source>
    </source>
</evidence>
<evidence type="ECO:0000269" key="4">
    <source>
    </source>
</evidence>
<evidence type="ECO:0000269" key="5">
    <source>
    </source>
</evidence>
<evidence type="ECO:0000269" key="6">
    <source>
    </source>
</evidence>
<evidence type="ECO:0000303" key="7">
    <source>
    </source>
</evidence>
<organism>
    <name type="scientific">Corynebacterium glutamicum (strain ATCC 13032 / DSM 20300 / JCM 1318 / BCRC 11384 / CCUG 27702 / LMG 3730 / NBRC 12168 / NCIMB 10025 / NRRL B-2784 / 534)</name>
    <dbReference type="NCBI Taxonomy" id="196627"/>
    <lineage>
        <taxon>Bacteria</taxon>
        <taxon>Bacillati</taxon>
        <taxon>Actinomycetota</taxon>
        <taxon>Actinomycetes</taxon>
        <taxon>Mycobacteriales</taxon>
        <taxon>Corynebacteriaceae</taxon>
        <taxon>Corynebacterium</taxon>
    </lineage>
</organism>
<feature type="chain" id="PRO_0000433052" description="HTH-type transcriptional activator RamA">
    <location>
        <begin position="1"/>
        <end position="281"/>
    </location>
</feature>
<feature type="domain" description="HTH luxR-type" evidence="1">
    <location>
        <begin position="213"/>
        <end position="278"/>
    </location>
</feature>